<sequence length="224" mass="25177">MAAAVPQRAWTVEQLRSEQLPKKDIIKFLQEHGSDSFLAEHKLLGNIKNVAKTANKDHLVTAYNHLFETKRFKGTESISKVSEQVKNVKLNEDKPKETKSEETLDEGPPKYTKSVLKKGDKTNFPKKGDVVHCWYTGTLQDGTVFDTNIQTSAKKKKNAKPLSFKVGVGKVIRGWDEALLTMSKGEKARLEIEPEWAYGKKGQPDAKIPPNAKLTFEVELVDID</sequence>
<evidence type="ECO:0000250" key="1">
    <source>
        <dbReference type="UniProtKB" id="Q62446"/>
    </source>
</evidence>
<evidence type="ECO:0000255" key="2">
    <source>
        <dbReference type="PROSITE-ProRule" id="PRU00277"/>
    </source>
</evidence>
<evidence type="ECO:0000256" key="3">
    <source>
        <dbReference type="SAM" id="MobiDB-lite"/>
    </source>
</evidence>
<evidence type="ECO:0000305" key="4"/>
<evidence type="ECO:0007744" key="5">
    <source>
    </source>
</evidence>
<evidence type="ECO:0007744" key="6">
    <source>
    </source>
</evidence>
<evidence type="ECO:0007744" key="7">
    <source>
    </source>
</evidence>
<evidence type="ECO:0007744" key="8">
    <source>
    </source>
</evidence>
<evidence type="ECO:0007744" key="9">
    <source>
    </source>
</evidence>
<evidence type="ECO:0007744" key="10">
    <source>
    </source>
</evidence>
<evidence type="ECO:0007829" key="11">
    <source>
        <dbReference type="PDB" id="2KFV"/>
    </source>
</evidence>
<evidence type="ECO:0007829" key="12">
    <source>
        <dbReference type="PDB" id="2MPH"/>
    </source>
</evidence>
<evidence type="ECO:0007829" key="13">
    <source>
        <dbReference type="PDB" id="5D75"/>
    </source>
</evidence>
<evidence type="ECO:0007829" key="14">
    <source>
        <dbReference type="PDB" id="5GPG"/>
    </source>
</evidence>
<proteinExistence type="evidence at protein level"/>
<name>FKBP3_HUMAN</name>
<reference key="1">
    <citation type="journal article" date="1992" name="Biochem. Biophys. Res. Commun.">
        <title>Isolation of a human cDNA encoding a 25 kDa FK-506 and rapamycin binding protein.</title>
        <authorList>
            <person name="Wiederrecht G."/>
            <person name="Martin M."/>
            <person name="Sigal N."/>
            <person name="Siekierka J.J."/>
        </authorList>
    </citation>
    <scope>NUCLEOTIDE SEQUENCE [MRNA]</scope>
</reference>
<reference key="2">
    <citation type="journal article" date="1992" name="Biochem. Biophys. Res. Commun.">
        <title>cDNA cloning of a human 25 kDa FK506 and rapamycin binding protein.</title>
        <authorList>
            <person name="Hung D.T."/>
            <person name="Schreiber S.L."/>
        </authorList>
    </citation>
    <scope>NUCLEOTIDE SEQUENCE [MRNA]</scope>
</reference>
<reference key="3">
    <citation type="journal article" date="1992" name="J. Biol. Chem.">
        <title>Molecular cloning of a 25-kDa high affinity rapamycin binding protein, FKBP25.</title>
        <authorList>
            <person name="Jin Y.-J."/>
            <person name="Burakoff S.J."/>
            <person name="Bierer B.E."/>
        </authorList>
    </citation>
    <scope>NUCLEOTIDE SEQUENCE [MRNA]</scope>
    <source>
        <tissue>Thymus</tissue>
    </source>
</reference>
<reference key="4">
    <citation type="submission" date="2003-05" db="EMBL/GenBank/DDBJ databases">
        <title>Cloning of human full-length CDSs in BD Creator(TM) system donor vector.</title>
        <authorList>
            <person name="Kalnine N."/>
            <person name="Chen X."/>
            <person name="Rolfs A."/>
            <person name="Halleck A."/>
            <person name="Hines L."/>
            <person name="Eisenstein S."/>
            <person name="Koundinya M."/>
            <person name="Raphael J."/>
            <person name="Moreira D."/>
            <person name="Kelley T."/>
            <person name="LaBaer J."/>
            <person name="Lin Y."/>
            <person name="Phelan M."/>
            <person name="Farmer A."/>
        </authorList>
    </citation>
    <scope>NUCLEOTIDE SEQUENCE [LARGE SCALE MRNA]</scope>
</reference>
<reference key="5">
    <citation type="journal article" date="2004" name="Nat. Genet.">
        <title>Complete sequencing and characterization of 21,243 full-length human cDNAs.</title>
        <authorList>
            <person name="Ota T."/>
            <person name="Suzuki Y."/>
            <person name="Nishikawa T."/>
            <person name="Otsuki T."/>
            <person name="Sugiyama T."/>
            <person name="Irie R."/>
            <person name="Wakamatsu A."/>
            <person name="Hayashi K."/>
            <person name="Sato H."/>
            <person name="Nagai K."/>
            <person name="Kimura K."/>
            <person name="Makita H."/>
            <person name="Sekine M."/>
            <person name="Obayashi M."/>
            <person name="Nishi T."/>
            <person name="Shibahara T."/>
            <person name="Tanaka T."/>
            <person name="Ishii S."/>
            <person name="Yamamoto J."/>
            <person name="Saito K."/>
            <person name="Kawai Y."/>
            <person name="Isono Y."/>
            <person name="Nakamura Y."/>
            <person name="Nagahari K."/>
            <person name="Murakami K."/>
            <person name="Yasuda T."/>
            <person name="Iwayanagi T."/>
            <person name="Wagatsuma M."/>
            <person name="Shiratori A."/>
            <person name="Sudo H."/>
            <person name="Hosoiri T."/>
            <person name="Kaku Y."/>
            <person name="Kodaira H."/>
            <person name="Kondo H."/>
            <person name="Sugawara M."/>
            <person name="Takahashi M."/>
            <person name="Kanda K."/>
            <person name="Yokoi T."/>
            <person name="Furuya T."/>
            <person name="Kikkawa E."/>
            <person name="Omura Y."/>
            <person name="Abe K."/>
            <person name="Kamihara K."/>
            <person name="Katsuta N."/>
            <person name="Sato K."/>
            <person name="Tanikawa M."/>
            <person name="Yamazaki M."/>
            <person name="Ninomiya K."/>
            <person name="Ishibashi T."/>
            <person name="Yamashita H."/>
            <person name="Murakawa K."/>
            <person name="Fujimori K."/>
            <person name="Tanai H."/>
            <person name="Kimata M."/>
            <person name="Watanabe M."/>
            <person name="Hiraoka S."/>
            <person name="Chiba Y."/>
            <person name="Ishida S."/>
            <person name="Ono Y."/>
            <person name="Takiguchi S."/>
            <person name="Watanabe S."/>
            <person name="Yosida M."/>
            <person name="Hotuta T."/>
            <person name="Kusano J."/>
            <person name="Kanehori K."/>
            <person name="Takahashi-Fujii A."/>
            <person name="Hara H."/>
            <person name="Tanase T.-O."/>
            <person name="Nomura Y."/>
            <person name="Togiya S."/>
            <person name="Komai F."/>
            <person name="Hara R."/>
            <person name="Takeuchi K."/>
            <person name="Arita M."/>
            <person name="Imose N."/>
            <person name="Musashino K."/>
            <person name="Yuuki H."/>
            <person name="Oshima A."/>
            <person name="Sasaki N."/>
            <person name="Aotsuka S."/>
            <person name="Yoshikawa Y."/>
            <person name="Matsunawa H."/>
            <person name="Ichihara T."/>
            <person name="Shiohata N."/>
            <person name="Sano S."/>
            <person name="Moriya S."/>
            <person name="Momiyama H."/>
            <person name="Satoh N."/>
            <person name="Takami S."/>
            <person name="Terashima Y."/>
            <person name="Suzuki O."/>
            <person name="Nakagawa S."/>
            <person name="Senoh A."/>
            <person name="Mizoguchi H."/>
            <person name="Goto Y."/>
            <person name="Shimizu F."/>
            <person name="Wakebe H."/>
            <person name="Hishigaki H."/>
            <person name="Watanabe T."/>
            <person name="Sugiyama A."/>
            <person name="Takemoto M."/>
            <person name="Kawakami B."/>
            <person name="Yamazaki M."/>
            <person name="Watanabe K."/>
            <person name="Kumagai A."/>
            <person name="Itakura S."/>
            <person name="Fukuzumi Y."/>
            <person name="Fujimori Y."/>
            <person name="Komiyama M."/>
            <person name="Tashiro H."/>
            <person name="Tanigami A."/>
            <person name="Fujiwara T."/>
            <person name="Ono T."/>
            <person name="Yamada K."/>
            <person name="Fujii Y."/>
            <person name="Ozaki K."/>
            <person name="Hirao M."/>
            <person name="Ohmori Y."/>
            <person name="Kawabata A."/>
            <person name="Hikiji T."/>
            <person name="Kobatake N."/>
            <person name="Inagaki H."/>
            <person name="Ikema Y."/>
            <person name="Okamoto S."/>
            <person name="Okitani R."/>
            <person name="Kawakami T."/>
            <person name="Noguchi S."/>
            <person name="Itoh T."/>
            <person name="Shigeta K."/>
            <person name="Senba T."/>
            <person name="Matsumura K."/>
            <person name="Nakajima Y."/>
            <person name="Mizuno T."/>
            <person name="Morinaga M."/>
            <person name="Sasaki M."/>
            <person name="Togashi T."/>
            <person name="Oyama M."/>
            <person name="Hata H."/>
            <person name="Watanabe M."/>
            <person name="Komatsu T."/>
            <person name="Mizushima-Sugano J."/>
            <person name="Satoh T."/>
            <person name="Shirai Y."/>
            <person name="Takahashi Y."/>
            <person name="Nakagawa K."/>
            <person name="Okumura K."/>
            <person name="Nagase T."/>
            <person name="Nomura N."/>
            <person name="Kikuchi H."/>
            <person name="Masuho Y."/>
            <person name="Yamashita R."/>
            <person name="Nakai K."/>
            <person name="Yada T."/>
            <person name="Nakamura Y."/>
            <person name="Ohara O."/>
            <person name="Isogai T."/>
            <person name="Sugano S."/>
        </authorList>
    </citation>
    <scope>NUCLEOTIDE SEQUENCE [LARGE SCALE MRNA]</scope>
    <source>
        <tissue>Uterus</tissue>
    </source>
</reference>
<reference key="6">
    <citation type="submission" date="2005-09" db="EMBL/GenBank/DDBJ databases">
        <authorList>
            <person name="Mural R.J."/>
            <person name="Istrail S."/>
            <person name="Sutton G.G."/>
            <person name="Florea L."/>
            <person name="Halpern A.L."/>
            <person name="Mobarry C.M."/>
            <person name="Lippert R."/>
            <person name="Walenz B."/>
            <person name="Shatkay H."/>
            <person name="Dew I."/>
            <person name="Miller J.R."/>
            <person name="Flanigan M.J."/>
            <person name="Edwards N.J."/>
            <person name="Bolanos R."/>
            <person name="Fasulo D."/>
            <person name="Halldorsson B.V."/>
            <person name="Hannenhalli S."/>
            <person name="Turner R."/>
            <person name="Yooseph S."/>
            <person name="Lu F."/>
            <person name="Nusskern D.R."/>
            <person name="Shue B.C."/>
            <person name="Zheng X.H."/>
            <person name="Zhong F."/>
            <person name="Delcher A.L."/>
            <person name="Huson D.H."/>
            <person name="Kravitz S.A."/>
            <person name="Mouchard L."/>
            <person name="Reinert K."/>
            <person name="Remington K.A."/>
            <person name="Clark A.G."/>
            <person name="Waterman M.S."/>
            <person name="Eichler E.E."/>
            <person name="Adams M.D."/>
            <person name="Hunkapiller M.W."/>
            <person name="Myers E.W."/>
            <person name="Venter J.C."/>
        </authorList>
    </citation>
    <scope>NUCLEOTIDE SEQUENCE [LARGE SCALE GENOMIC DNA]</scope>
</reference>
<reference key="7">
    <citation type="journal article" date="2004" name="Genome Res.">
        <title>The status, quality, and expansion of the NIH full-length cDNA project: the Mammalian Gene Collection (MGC).</title>
        <authorList>
            <consortium name="The MGC Project Team"/>
        </authorList>
    </citation>
    <scope>NUCLEOTIDE SEQUENCE [LARGE SCALE MRNA]</scope>
    <source>
        <tissue>Skeletal muscle</tissue>
        <tissue>Skin</tissue>
    </source>
</reference>
<reference key="8">
    <citation type="journal article" date="2003" name="Nature">
        <title>Proteomic characterization of the human centrosome by protein correlation profiling.</title>
        <authorList>
            <person name="Andersen J.S."/>
            <person name="Wilkinson C.J."/>
            <person name="Mayor T."/>
            <person name="Mortensen P."/>
            <person name="Nigg E.A."/>
            <person name="Mann M."/>
        </authorList>
    </citation>
    <scope>IDENTIFICATION BY MASS SPECTROMETRY</scope>
    <source>
        <tissue>Lymphoblast</tissue>
    </source>
</reference>
<reference key="9">
    <citation type="journal article" date="2006" name="Cell">
        <title>Global, in vivo, and site-specific phosphorylation dynamics in signaling networks.</title>
        <authorList>
            <person name="Olsen J.V."/>
            <person name="Blagoev B."/>
            <person name="Gnad F."/>
            <person name="Macek B."/>
            <person name="Kumar C."/>
            <person name="Mortensen P."/>
            <person name="Mann M."/>
        </authorList>
    </citation>
    <scope>IDENTIFICATION BY MASS SPECTROMETRY [LARGE SCALE ANALYSIS]</scope>
    <source>
        <tissue>Cervix carcinoma</tissue>
    </source>
</reference>
<reference key="10">
    <citation type="journal article" date="2008" name="Proc. Natl. Acad. Sci. U.S.A.">
        <title>A quantitative atlas of mitotic phosphorylation.</title>
        <authorList>
            <person name="Dephoure N."/>
            <person name="Zhou C."/>
            <person name="Villen J."/>
            <person name="Beausoleil S.A."/>
            <person name="Bakalarski C.E."/>
            <person name="Elledge S.J."/>
            <person name="Gygi S.P."/>
        </authorList>
    </citation>
    <scope>PHOSPHORYLATION [LARGE SCALE ANALYSIS] AT SER-152</scope>
    <scope>IDENTIFICATION BY MASS SPECTROMETRY [LARGE SCALE ANALYSIS]</scope>
    <source>
        <tissue>Cervix carcinoma</tissue>
    </source>
</reference>
<reference key="11">
    <citation type="journal article" date="2009" name="Anal. Chem.">
        <title>Lys-N and trypsin cover complementary parts of the phosphoproteome in a refined SCX-based approach.</title>
        <authorList>
            <person name="Gauci S."/>
            <person name="Helbig A.O."/>
            <person name="Slijper M."/>
            <person name="Krijgsveld J."/>
            <person name="Heck A.J."/>
            <person name="Mohammed S."/>
        </authorList>
    </citation>
    <scope>ACETYLATION [LARGE SCALE ANALYSIS] AT ALA-2</scope>
    <scope>CLEAVAGE OF INITIATOR METHIONINE [LARGE SCALE ANALYSIS]</scope>
    <scope>IDENTIFICATION BY MASS SPECTROMETRY [LARGE SCALE ANALYSIS]</scope>
</reference>
<reference key="12">
    <citation type="journal article" date="2009" name="Science">
        <title>Lysine acetylation targets protein complexes and co-regulates major cellular functions.</title>
        <authorList>
            <person name="Choudhary C."/>
            <person name="Kumar C."/>
            <person name="Gnad F."/>
            <person name="Nielsen M.L."/>
            <person name="Rehman M."/>
            <person name="Walther T.C."/>
            <person name="Olsen J.V."/>
            <person name="Mann M."/>
        </authorList>
    </citation>
    <scope>ACETYLATION [LARGE SCALE ANALYSIS] AT LYS-170</scope>
    <scope>IDENTIFICATION BY MASS SPECTROMETRY [LARGE SCALE ANALYSIS]</scope>
</reference>
<reference key="13">
    <citation type="journal article" date="2010" name="Sci. Signal.">
        <title>Quantitative phosphoproteomics reveals widespread full phosphorylation site occupancy during mitosis.</title>
        <authorList>
            <person name="Olsen J.V."/>
            <person name="Vermeulen M."/>
            <person name="Santamaria A."/>
            <person name="Kumar C."/>
            <person name="Miller M.L."/>
            <person name="Jensen L.J."/>
            <person name="Gnad F."/>
            <person name="Cox J."/>
            <person name="Jensen T.S."/>
            <person name="Nigg E.A."/>
            <person name="Brunak S."/>
            <person name="Mann M."/>
        </authorList>
    </citation>
    <scope>PHOSPHORYLATION [LARGE SCALE ANALYSIS] AT SER-36</scope>
    <scope>IDENTIFICATION BY MASS SPECTROMETRY [LARGE SCALE ANALYSIS]</scope>
    <source>
        <tissue>Cervix carcinoma</tissue>
    </source>
</reference>
<reference key="14">
    <citation type="journal article" date="2011" name="BMC Syst. Biol.">
        <title>Initial characterization of the human central proteome.</title>
        <authorList>
            <person name="Burkard T.R."/>
            <person name="Planyavsky M."/>
            <person name="Kaupe I."/>
            <person name="Breitwieser F.P."/>
            <person name="Buerckstuemmer T."/>
            <person name="Bennett K.L."/>
            <person name="Superti-Furga G."/>
            <person name="Colinge J."/>
        </authorList>
    </citation>
    <scope>IDENTIFICATION BY MASS SPECTROMETRY [LARGE SCALE ANALYSIS]</scope>
</reference>
<reference key="15">
    <citation type="journal article" date="2012" name="Proc. Natl. Acad. Sci. U.S.A.">
        <title>N-terminal acetylome analyses and functional insights of the N-terminal acetyltransferase NatB.</title>
        <authorList>
            <person name="Van Damme P."/>
            <person name="Lasa M."/>
            <person name="Polevoda B."/>
            <person name="Gazquez C."/>
            <person name="Elosegui-Artola A."/>
            <person name="Kim D.S."/>
            <person name="De Juan-Pardo E."/>
            <person name="Demeyer K."/>
            <person name="Hole K."/>
            <person name="Larrea E."/>
            <person name="Timmerman E."/>
            <person name="Prieto J."/>
            <person name="Arnesen T."/>
            <person name="Sherman F."/>
            <person name="Gevaert K."/>
            <person name="Aldabe R."/>
        </authorList>
    </citation>
    <scope>ACETYLATION [LARGE SCALE ANALYSIS] AT ALA-2</scope>
    <scope>CLEAVAGE OF INITIATOR METHIONINE [LARGE SCALE ANALYSIS]</scope>
    <scope>IDENTIFICATION BY MASS SPECTROMETRY [LARGE SCALE ANALYSIS]</scope>
</reference>
<reference key="16">
    <citation type="journal article" date="2013" name="J. Proteome Res.">
        <title>Toward a comprehensive characterization of a human cancer cell phosphoproteome.</title>
        <authorList>
            <person name="Zhou H."/>
            <person name="Di Palma S."/>
            <person name="Preisinger C."/>
            <person name="Peng M."/>
            <person name="Polat A.N."/>
            <person name="Heck A.J."/>
            <person name="Mohammed S."/>
        </authorList>
    </citation>
    <scope>IDENTIFICATION BY MASS SPECTROMETRY [LARGE SCALE ANALYSIS]</scope>
    <source>
        <tissue>Cervix carcinoma</tissue>
        <tissue>Erythroleukemia</tissue>
    </source>
</reference>
<reference key="17">
    <citation type="journal article" date="2014" name="J. Proteomics">
        <title>An enzyme assisted RP-RPLC approach for in-depth analysis of human liver phosphoproteome.</title>
        <authorList>
            <person name="Bian Y."/>
            <person name="Song C."/>
            <person name="Cheng K."/>
            <person name="Dong M."/>
            <person name="Wang F."/>
            <person name="Huang J."/>
            <person name="Sun D."/>
            <person name="Wang L."/>
            <person name="Ye M."/>
            <person name="Zou H."/>
        </authorList>
    </citation>
    <scope>IDENTIFICATION BY MASS SPECTROMETRY [LARGE SCALE ANALYSIS]</scope>
    <source>
        <tissue>Liver</tissue>
    </source>
</reference>
<reference key="18">
    <citation type="journal article" date="2015" name="Proteomics">
        <title>N-terminome analysis of the human mitochondrial proteome.</title>
        <authorList>
            <person name="Vaca Jacome A.S."/>
            <person name="Rabilloud T."/>
            <person name="Schaeffer-Reiss C."/>
            <person name="Rompais M."/>
            <person name="Ayoub D."/>
            <person name="Lane L."/>
            <person name="Bairoch A."/>
            <person name="Van Dorsselaer A."/>
            <person name="Carapito C."/>
        </authorList>
    </citation>
    <scope>ACETYLATION [LARGE SCALE ANALYSIS] AT ALA-2</scope>
    <scope>CLEAVAGE OF INITIATOR METHIONINE [LARGE SCALE ANALYSIS]</scope>
    <scope>IDENTIFICATION BY MASS SPECTROMETRY [LARGE SCALE ANALYSIS]</scope>
</reference>
<reference key="19">
    <citation type="journal article" date="1996" name="J. Am. Chem. Soc.">
        <title>Structure of the human 25 kDa FK506 binding protein complexed with rapamycin.</title>
        <authorList>
            <person name="Liang J."/>
            <person name="Hung D.T."/>
            <person name="Schreiber S.L."/>
            <person name="Clardy J."/>
        </authorList>
    </citation>
    <scope>X-RAY CRYSTALLOGRAPHY (2.5 ANGSTROMS) OF 109-224</scope>
</reference>
<dbReference type="EC" id="5.2.1.8"/>
<dbReference type="EMBL" id="M96256">
    <property type="protein sequence ID" value="AAA58471.1"/>
    <property type="molecule type" value="mRNA"/>
</dbReference>
<dbReference type="EMBL" id="M90309">
    <property type="protein sequence ID" value="AAA58475.1"/>
    <property type="molecule type" value="mRNA"/>
</dbReference>
<dbReference type="EMBL" id="M90820">
    <property type="protein sequence ID" value="AAA58474.1"/>
    <property type="status" value="ALT_FRAME"/>
    <property type="molecule type" value="mRNA"/>
</dbReference>
<dbReference type="EMBL" id="BT006904">
    <property type="protein sequence ID" value="AAP35550.1"/>
    <property type="molecule type" value="mRNA"/>
</dbReference>
<dbReference type="EMBL" id="AK311915">
    <property type="protein sequence ID" value="BAG34856.1"/>
    <property type="molecule type" value="mRNA"/>
</dbReference>
<dbReference type="EMBL" id="CH471078">
    <property type="protein sequence ID" value="EAW65785.1"/>
    <property type="molecule type" value="Genomic_DNA"/>
</dbReference>
<dbReference type="EMBL" id="BC016288">
    <property type="protein sequence ID" value="AAH16288.1"/>
    <property type="molecule type" value="mRNA"/>
</dbReference>
<dbReference type="EMBL" id="BC020809">
    <property type="protein sequence ID" value="AAH20809.1"/>
    <property type="molecule type" value="mRNA"/>
</dbReference>
<dbReference type="CCDS" id="CCDS9683.1"/>
<dbReference type="PIR" id="JQ1522">
    <property type="entry name" value="JQ1522"/>
</dbReference>
<dbReference type="RefSeq" id="NP_002004.1">
    <property type="nucleotide sequence ID" value="NM_002013.4"/>
</dbReference>
<dbReference type="RefSeq" id="XP_054231554.1">
    <property type="nucleotide sequence ID" value="XM_054375579.1"/>
</dbReference>
<dbReference type="PDB" id="1PBK">
    <property type="method" value="X-ray"/>
    <property type="resolution" value="2.50 A"/>
    <property type="chains" value="A=109-224"/>
</dbReference>
<dbReference type="PDB" id="2KFV">
    <property type="method" value="NMR"/>
    <property type="chains" value="A=1-73"/>
</dbReference>
<dbReference type="PDB" id="2MPH">
    <property type="method" value="NMR"/>
    <property type="chains" value="A=1-224"/>
</dbReference>
<dbReference type="PDB" id="5D75">
    <property type="method" value="X-ray"/>
    <property type="resolution" value="1.83 A"/>
    <property type="chains" value="A=109-224"/>
</dbReference>
<dbReference type="PDB" id="5GPG">
    <property type="method" value="X-ray"/>
    <property type="resolution" value="1.67 A"/>
    <property type="chains" value="A=109-224"/>
</dbReference>
<dbReference type="PDBsum" id="1PBK"/>
<dbReference type="PDBsum" id="2KFV"/>
<dbReference type="PDBsum" id="2MPH"/>
<dbReference type="PDBsum" id="5D75"/>
<dbReference type="PDBsum" id="5GPG"/>
<dbReference type="BMRB" id="Q00688"/>
<dbReference type="SMR" id="Q00688"/>
<dbReference type="BioGRID" id="108577">
    <property type="interactions" value="154"/>
</dbReference>
<dbReference type="FunCoup" id="Q00688">
    <property type="interactions" value="787"/>
</dbReference>
<dbReference type="IntAct" id="Q00688">
    <property type="interactions" value="31"/>
</dbReference>
<dbReference type="MINT" id="Q00688"/>
<dbReference type="STRING" id="9606.ENSP00000216330"/>
<dbReference type="BindingDB" id="Q00688"/>
<dbReference type="ChEMBL" id="CHEMBL4746"/>
<dbReference type="DrugCentral" id="Q00688"/>
<dbReference type="GlyGen" id="Q00688">
    <property type="glycosylation" value="1 site, 1 O-linked glycan (1 site)"/>
</dbReference>
<dbReference type="iPTMnet" id="Q00688"/>
<dbReference type="MetOSite" id="Q00688"/>
<dbReference type="PhosphoSitePlus" id="Q00688"/>
<dbReference type="SwissPalm" id="Q00688"/>
<dbReference type="BioMuta" id="FKBP3"/>
<dbReference type="DMDM" id="232096"/>
<dbReference type="jPOST" id="Q00688"/>
<dbReference type="MassIVE" id="Q00688"/>
<dbReference type="PaxDb" id="9606-ENSP00000216330"/>
<dbReference type="PeptideAtlas" id="Q00688"/>
<dbReference type="ProteomicsDB" id="57869"/>
<dbReference type="Pumba" id="Q00688"/>
<dbReference type="TopDownProteomics" id="Q00688"/>
<dbReference type="Antibodypedia" id="56">
    <property type="antibodies" value="233 antibodies from 33 providers"/>
</dbReference>
<dbReference type="DNASU" id="2287"/>
<dbReference type="Ensembl" id="ENST00000216330.7">
    <property type="protein sequence ID" value="ENSP00000216330.3"/>
    <property type="gene ID" value="ENSG00000100442.11"/>
</dbReference>
<dbReference type="Ensembl" id="ENST00000396062.4">
    <property type="protein sequence ID" value="ENSP00000379374.3"/>
    <property type="gene ID" value="ENSG00000100442.11"/>
</dbReference>
<dbReference type="GeneID" id="2287"/>
<dbReference type="KEGG" id="hsa:2287"/>
<dbReference type="MANE-Select" id="ENST00000396062.4">
    <property type="protein sequence ID" value="ENSP00000379374.3"/>
    <property type="RefSeq nucleotide sequence ID" value="NM_002013.4"/>
    <property type="RefSeq protein sequence ID" value="NP_002004.1"/>
</dbReference>
<dbReference type="UCSC" id="uc010tqf.3">
    <property type="organism name" value="human"/>
</dbReference>
<dbReference type="AGR" id="HGNC:3719"/>
<dbReference type="CTD" id="2287"/>
<dbReference type="DisGeNET" id="2287"/>
<dbReference type="GeneCards" id="FKBP3"/>
<dbReference type="HGNC" id="HGNC:3719">
    <property type="gene designation" value="FKBP3"/>
</dbReference>
<dbReference type="HPA" id="ENSG00000100442">
    <property type="expression patterns" value="Tissue enhanced (skeletal muscle, tongue)"/>
</dbReference>
<dbReference type="MIM" id="186947">
    <property type="type" value="gene"/>
</dbReference>
<dbReference type="neXtProt" id="NX_Q00688"/>
<dbReference type="OpenTargets" id="ENSG00000100442"/>
<dbReference type="PharmGKB" id="PA28160"/>
<dbReference type="VEuPathDB" id="HostDB:ENSG00000100442"/>
<dbReference type="eggNOG" id="KOG0544">
    <property type="taxonomic scope" value="Eukaryota"/>
</dbReference>
<dbReference type="GeneTree" id="ENSGT00940000154514"/>
<dbReference type="HOGENOM" id="CLU_013615_12_2_1"/>
<dbReference type="InParanoid" id="Q00688"/>
<dbReference type="OMA" id="IEPDWAY"/>
<dbReference type="OrthoDB" id="1902587at2759"/>
<dbReference type="PAN-GO" id="Q00688">
    <property type="GO annotations" value="0 GO annotations based on evolutionary models"/>
</dbReference>
<dbReference type="PhylomeDB" id="Q00688"/>
<dbReference type="TreeFam" id="TF105293"/>
<dbReference type="BRENDA" id="5.2.1.8">
    <property type="organism ID" value="2681"/>
</dbReference>
<dbReference type="PathwayCommons" id="Q00688"/>
<dbReference type="SignaLink" id="Q00688"/>
<dbReference type="SIGNOR" id="Q00688"/>
<dbReference type="BioGRID-ORCS" id="2287">
    <property type="hits" value="81 hits in 1148 CRISPR screens"/>
</dbReference>
<dbReference type="ChiTaRS" id="FKBP3">
    <property type="organism name" value="human"/>
</dbReference>
<dbReference type="EvolutionaryTrace" id="Q00688"/>
<dbReference type="GeneWiki" id="FKBP3"/>
<dbReference type="GenomeRNAi" id="2287"/>
<dbReference type="Pharos" id="Q00688">
    <property type="development level" value="Tbio"/>
</dbReference>
<dbReference type="PRO" id="PR:Q00688"/>
<dbReference type="Proteomes" id="UP000005640">
    <property type="component" value="Chromosome 14"/>
</dbReference>
<dbReference type="RNAct" id="Q00688">
    <property type="molecule type" value="protein"/>
</dbReference>
<dbReference type="Bgee" id="ENSG00000100442">
    <property type="expression patterns" value="Expressed in skeletal muscle tissue of biceps brachii and 208 other cell types or tissues"/>
</dbReference>
<dbReference type="ExpressionAtlas" id="Q00688">
    <property type="expression patterns" value="baseline and differential"/>
</dbReference>
<dbReference type="GO" id="GO:0005634">
    <property type="term" value="C:nucleus"/>
    <property type="evidence" value="ECO:0007669"/>
    <property type="project" value="UniProtKB-SubCell"/>
</dbReference>
<dbReference type="GO" id="GO:0005528">
    <property type="term" value="F:FK506 binding"/>
    <property type="evidence" value="ECO:0000304"/>
    <property type="project" value="ProtInc"/>
</dbReference>
<dbReference type="GO" id="GO:0003755">
    <property type="term" value="F:peptidyl-prolyl cis-trans isomerase activity"/>
    <property type="evidence" value="ECO:0007669"/>
    <property type="project" value="UniProtKB-KW"/>
</dbReference>
<dbReference type="GO" id="GO:0003723">
    <property type="term" value="F:RNA binding"/>
    <property type="evidence" value="ECO:0007005"/>
    <property type="project" value="UniProtKB"/>
</dbReference>
<dbReference type="GO" id="GO:0038023">
    <property type="term" value="F:signaling receptor activity"/>
    <property type="evidence" value="ECO:0000304"/>
    <property type="project" value="ProtInc"/>
</dbReference>
<dbReference type="CDD" id="cd21063">
    <property type="entry name" value="BTHB_FKBP25"/>
    <property type="match status" value="1"/>
</dbReference>
<dbReference type="FunFam" id="1.10.720.80:FF:000002">
    <property type="entry name" value="Peptidylprolyl isomerase"/>
    <property type="match status" value="1"/>
</dbReference>
<dbReference type="FunFam" id="3.10.50.40:FF:000023">
    <property type="entry name" value="Peptidylprolyl isomerase"/>
    <property type="match status" value="1"/>
</dbReference>
<dbReference type="Gene3D" id="1.10.720.80">
    <property type="match status" value="1"/>
</dbReference>
<dbReference type="Gene3D" id="3.10.50.40">
    <property type="match status" value="1"/>
</dbReference>
<dbReference type="IDEAL" id="IID00063"/>
<dbReference type="InterPro" id="IPR043368">
    <property type="entry name" value="FKBP3"/>
</dbReference>
<dbReference type="InterPro" id="IPR041200">
    <property type="entry name" value="FKBP3_BTHB"/>
</dbReference>
<dbReference type="InterPro" id="IPR046357">
    <property type="entry name" value="PPIase_dom_sf"/>
</dbReference>
<dbReference type="InterPro" id="IPR001179">
    <property type="entry name" value="PPIase_FKBP_dom"/>
</dbReference>
<dbReference type="PANTHER" id="PTHR46493">
    <property type="entry name" value="PEPTIDYL-PROLYL CIS-TRANS ISOMERASE FKBP3"/>
    <property type="match status" value="1"/>
</dbReference>
<dbReference type="PANTHER" id="PTHR46493:SF1">
    <property type="entry name" value="PEPTIDYL-PROLYL CIS-TRANS ISOMERASE FKBP3"/>
    <property type="match status" value="1"/>
</dbReference>
<dbReference type="Pfam" id="PF18410">
    <property type="entry name" value="BTHB"/>
    <property type="match status" value="1"/>
</dbReference>
<dbReference type="Pfam" id="PF00254">
    <property type="entry name" value="FKBP_C"/>
    <property type="match status" value="1"/>
</dbReference>
<dbReference type="SUPFAM" id="SSF54534">
    <property type="entry name" value="FKBP-like"/>
    <property type="match status" value="1"/>
</dbReference>
<dbReference type="PROSITE" id="PS50059">
    <property type="entry name" value="FKBP_PPIASE"/>
    <property type="match status" value="1"/>
</dbReference>
<accession>Q00688</accession>
<accession>B2R4Q9</accession>
<accession>Q14317</accession>
<feature type="initiator methionine" description="Removed" evidence="6 9 10">
    <location>
        <position position="1"/>
    </location>
</feature>
<feature type="chain" id="PRO_0000075307" description="Peptidyl-prolyl cis-trans isomerase FKBP3">
    <location>
        <begin position="2"/>
        <end position="224"/>
    </location>
</feature>
<feature type="domain" description="PPIase FKBP-type" evidence="2">
    <location>
        <begin position="128"/>
        <end position="224"/>
    </location>
</feature>
<feature type="region of interest" description="Disordered" evidence="3">
    <location>
        <begin position="89"/>
        <end position="111"/>
    </location>
</feature>
<feature type="compositionally biased region" description="Basic and acidic residues" evidence="3">
    <location>
        <begin position="89"/>
        <end position="102"/>
    </location>
</feature>
<feature type="modified residue" description="N-acetylalanine" evidence="6 9 10">
    <location>
        <position position="2"/>
    </location>
</feature>
<feature type="modified residue" description="Phosphoserine" evidence="8">
    <location>
        <position position="36"/>
    </location>
</feature>
<feature type="modified residue" description="N6-acetyllysine" evidence="1">
    <location>
        <position position="99"/>
    </location>
</feature>
<feature type="modified residue" description="Phosphoserine" evidence="5">
    <location>
        <position position="152"/>
    </location>
</feature>
<feature type="modified residue" description="N6-acetyllysine" evidence="7">
    <location>
        <position position="170"/>
    </location>
</feature>
<feature type="sequence conflict" description="In Ref. 3; AAA58474." evidence="4" ref="3">
    <original>T</original>
    <variation>A</variation>
    <location>
        <position position="181"/>
    </location>
</feature>
<feature type="helix" evidence="11">
    <location>
        <begin position="12"/>
        <end position="16"/>
    </location>
</feature>
<feature type="helix" evidence="11">
    <location>
        <begin position="23"/>
        <end position="32"/>
    </location>
</feature>
<feature type="helix" evidence="11">
    <location>
        <begin position="35"/>
        <end position="40"/>
    </location>
</feature>
<feature type="helix" evidence="11">
    <location>
        <begin position="47"/>
        <end position="51"/>
    </location>
</feature>
<feature type="helix" evidence="11">
    <location>
        <begin position="56"/>
        <end position="69"/>
    </location>
</feature>
<feature type="strand" evidence="14">
    <location>
        <begin position="110"/>
        <end position="117"/>
    </location>
</feature>
<feature type="strand" evidence="14">
    <location>
        <begin position="130"/>
        <end position="138"/>
    </location>
</feature>
<feature type="strand" evidence="14">
    <location>
        <begin position="144"/>
        <end position="147"/>
    </location>
</feature>
<feature type="turn" evidence="12">
    <location>
        <begin position="153"/>
        <end position="155"/>
    </location>
</feature>
<feature type="turn" evidence="13">
    <location>
        <begin position="156"/>
        <end position="158"/>
    </location>
</feature>
<feature type="strand" evidence="14">
    <location>
        <begin position="162"/>
        <end position="165"/>
    </location>
</feature>
<feature type="strand" evidence="14">
    <location>
        <begin position="168"/>
        <end position="171"/>
    </location>
</feature>
<feature type="helix" evidence="14">
    <location>
        <begin position="173"/>
        <end position="178"/>
    </location>
</feature>
<feature type="helix" evidence="14">
    <location>
        <begin position="179"/>
        <end position="181"/>
    </location>
</feature>
<feature type="strand" evidence="14">
    <location>
        <begin position="187"/>
        <end position="192"/>
    </location>
</feature>
<feature type="helix" evidence="14">
    <location>
        <begin position="194"/>
        <end position="196"/>
    </location>
</feature>
<feature type="turn" evidence="14">
    <location>
        <begin position="197"/>
        <end position="201"/>
    </location>
</feature>
<feature type="helix" evidence="14">
    <location>
        <begin position="204"/>
        <end position="206"/>
    </location>
</feature>
<feature type="strand" evidence="14">
    <location>
        <begin position="214"/>
        <end position="223"/>
    </location>
</feature>
<comment type="function">
    <text>FK506- and rapamycin-binding proteins (FKBPs) constitute a family of receptors for the two immunosuppressants which inhibit T-cell proliferation by arresting two distinct cytoplasmic signal transmission pathways. PPIases accelerate the folding of proteins.</text>
</comment>
<comment type="catalytic activity">
    <reaction>
        <text>[protein]-peptidylproline (omega=180) = [protein]-peptidylproline (omega=0)</text>
        <dbReference type="Rhea" id="RHEA:16237"/>
        <dbReference type="Rhea" id="RHEA-COMP:10747"/>
        <dbReference type="Rhea" id="RHEA-COMP:10748"/>
        <dbReference type="ChEBI" id="CHEBI:83833"/>
        <dbReference type="ChEBI" id="CHEBI:83834"/>
        <dbReference type="EC" id="5.2.1.8"/>
    </reaction>
</comment>
<comment type="activity regulation">
    <text>Inhibited preferentially by rapamycin over FK506.</text>
</comment>
<comment type="interaction">
    <interactant intactId="EBI-1044081">
        <id>Q00688</id>
    </interactant>
    <interactant intactId="EBI-389668">
        <id>Q00987</id>
        <label>MDM2</label>
    </interactant>
    <organismsDiffer>false</organismsDiffer>
    <experiments>2</experiments>
</comment>
<comment type="interaction">
    <interactant intactId="EBI-1044081">
        <id>Q00688</id>
    </interactant>
    <interactant intactId="EBI-2795348">
        <id>Q9UGN5</id>
        <label>PARP2</label>
    </interactant>
    <organismsDiffer>false</organismsDiffer>
    <experiments>2</experiments>
</comment>
<comment type="subcellular location">
    <subcellularLocation>
        <location>Nucleus</location>
    </subcellularLocation>
</comment>
<comment type="similarity">
    <text evidence="4">Belongs to the FKBP-type PPIase family.</text>
</comment>
<comment type="sequence caution" evidence="4">
    <conflict type="frameshift">
        <sequence resource="EMBL-CDS" id="AAA58474"/>
    </conflict>
</comment>
<gene>
    <name type="primary">FKBP3</name>
    <name type="synonym">FKBP25</name>
</gene>
<protein>
    <recommendedName>
        <fullName>Peptidyl-prolyl cis-trans isomerase FKBP3</fullName>
        <shortName>PPIase FKBP3</shortName>
        <ecNumber>5.2.1.8</ecNumber>
    </recommendedName>
    <alternativeName>
        <fullName>25 kDa FK506-binding protein</fullName>
        <shortName>25 kDa FKBP</shortName>
        <shortName>FKBP-25</shortName>
    </alternativeName>
    <alternativeName>
        <fullName>FK506-binding protein 3</fullName>
        <shortName>FKBP-3</shortName>
    </alternativeName>
    <alternativeName>
        <fullName>Immunophilin FKBP25</fullName>
    </alternativeName>
    <alternativeName>
        <fullName>Rapamycin-selective 25 kDa immunophilin</fullName>
    </alternativeName>
    <alternativeName>
        <fullName>Rotamase</fullName>
    </alternativeName>
</protein>
<keyword id="KW-0002">3D-structure</keyword>
<keyword id="KW-0007">Acetylation</keyword>
<keyword id="KW-0413">Isomerase</keyword>
<keyword id="KW-0539">Nucleus</keyword>
<keyword id="KW-0597">Phosphoprotein</keyword>
<keyword id="KW-1267">Proteomics identification</keyword>
<keyword id="KW-1185">Reference proteome</keyword>
<keyword id="KW-0697">Rotamase</keyword>
<organism>
    <name type="scientific">Homo sapiens</name>
    <name type="common">Human</name>
    <dbReference type="NCBI Taxonomy" id="9606"/>
    <lineage>
        <taxon>Eukaryota</taxon>
        <taxon>Metazoa</taxon>
        <taxon>Chordata</taxon>
        <taxon>Craniata</taxon>
        <taxon>Vertebrata</taxon>
        <taxon>Euteleostomi</taxon>
        <taxon>Mammalia</taxon>
        <taxon>Eutheria</taxon>
        <taxon>Euarchontoglires</taxon>
        <taxon>Primates</taxon>
        <taxon>Haplorrhini</taxon>
        <taxon>Catarrhini</taxon>
        <taxon>Hominidae</taxon>
        <taxon>Homo</taxon>
    </lineage>
</organism>